<sequence>MSLIVTRFAPSPTGYLHIGGLRTAIFNYLFARANQGKFFLRIEDTDLSRNSIEAANAIVEAFKWVGLEHDGEILYQSKRFEIYKEYIQKLLDEDKAYYCYMSKEELDALREEQKARKETPRYDNRYRDFKGTPPKGIEPVVRIKVPQNEVIGFNDGVKGEVKVNTNEIDDFIIARSDGTPTYNFVVTIDDALMGITDVIRGDDHLSNTPKQIVLYKALNFKIPNFFHVPMILNEEGQKLSKRHGATNVMDYQEMGYLKEALVNFLARLGWSYQDKEVFSMQELLEWFNPKDLNSSPSCFSWHKLNWLNAHYLKNQSVQELLKLLKPFSFSDLSHLNPAQLDRLLDALKERSQTLKELALKIDEVLTAPIEYEEKVFKKLNQALVMPLLEKFKLALDKTDFNDESALENAMHQIIEEEKIKAGHFMQPLRLALLGKGGGIGLKEALFILGKAESIKRIEEFLKN</sequence>
<feature type="chain" id="PRO_0000119578" description="Glutamate--tRNA ligase 1">
    <location>
        <begin position="1"/>
        <end position="463"/>
    </location>
</feature>
<feature type="short sequence motif" description="'HIGH' region" evidence="1">
    <location>
        <begin position="10"/>
        <end position="20"/>
    </location>
</feature>
<feature type="short sequence motif" description="'KMSKS' region" evidence="1">
    <location>
        <begin position="238"/>
        <end position="242"/>
    </location>
</feature>
<feature type="binding site" evidence="1">
    <location>
        <position position="241"/>
    </location>
    <ligand>
        <name>ATP</name>
        <dbReference type="ChEBI" id="CHEBI:30616"/>
    </ligand>
</feature>
<proteinExistence type="inferred from homology"/>
<gene>
    <name evidence="1" type="primary">gltX1</name>
    <name type="ordered locus">jhp_0428</name>
</gene>
<reference key="1">
    <citation type="journal article" date="1999" name="Nature">
        <title>Genomic sequence comparison of two unrelated isolates of the human gastric pathogen Helicobacter pylori.</title>
        <authorList>
            <person name="Alm R.A."/>
            <person name="Ling L.-S.L."/>
            <person name="Moir D.T."/>
            <person name="King B.L."/>
            <person name="Brown E.D."/>
            <person name="Doig P.C."/>
            <person name="Smith D.R."/>
            <person name="Noonan B."/>
            <person name="Guild B.C."/>
            <person name="deJonge B.L."/>
            <person name="Carmel G."/>
            <person name="Tummino P.J."/>
            <person name="Caruso A."/>
            <person name="Uria-Nickelsen M."/>
            <person name="Mills D.M."/>
            <person name="Ives C."/>
            <person name="Gibson R."/>
            <person name="Merberg D."/>
            <person name="Mills S.D."/>
            <person name="Jiang Q."/>
            <person name="Taylor D.E."/>
            <person name="Vovis G.F."/>
            <person name="Trust T.J."/>
        </authorList>
    </citation>
    <scope>NUCLEOTIDE SEQUENCE [LARGE SCALE GENOMIC DNA]</scope>
    <source>
        <strain>J99 / ATCC 700824</strain>
    </source>
</reference>
<name>SYE1_HELPJ</name>
<dbReference type="EC" id="6.1.1.17" evidence="1"/>
<dbReference type="EMBL" id="AE001439">
    <property type="protein sequence ID" value="AAD06009.1"/>
    <property type="molecule type" value="Genomic_DNA"/>
</dbReference>
<dbReference type="PIR" id="D71932">
    <property type="entry name" value="D71932"/>
</dbReference>
<dbReference type="RefSeq" id="WP_000053289.1">
    <property type="nucleotide sequence ID" value="NC_000921.1"/>
</dbReference>
<dbReference type="SMR" id="Q9ZLZ7"/>
<dbReference type="KEGG" id="hpj:jhp_0428"/>
<dbReference type="PATRIC" id="fig|85963.30.peg.580"/>
<dbReference type="eggNOG" id="COG0008">
    <property type="taxonomic scope" value="Bacteria"/>
</dbReference>
<dbReference type="Proteomes" id="UP000000804">
    <property type="component" value="Chromosome"/>
</dbReference>
<dbReference type="GO" id="GO:0005829">
    <property type="term" value="C:cytosol"/>
    <property type="evidence" value="ECO:0007669"/>
    <property type="project" value="TreeGrafter"/>
</dbReference>
<dbReference type="GO" id="GO:0005524">
    <property type="term" value="F:ATP binding"/>
    <property type="evidence" value="ECO:0007669"/>
    <property type="project" value="UniProtKB-UniRule"/>
</dbReference>
<dbReference type="GO" id="GO:0004818">
    <property type="term" value="F:glutamate-tRNA ligase activity"/>
    <property type="evidence" value="ECO:0007669"/>
    <property type="project" value="UniProtKB-UniRule"/>
</dbReference>
<dbReference type="GO" id="GO:0000049">
    <property type="term" value="F:tRNA binding"/>
    <property type="evidence" value="ECO:0007669"/>
    <property type="project" value="InterPro"/>
</dbReference>
<dbReference type="GO" id="GO:0008270">
    <property type="term" value="F:zinc ion binding"/>
    <property type="evidence" value="ECO:0007669"/>
    <property type="project" value="InterPro"/>
</dbReference>
<dbReference type="GO" id="GO:0006424">
    <property type="term" value="P:glutamyl-tRNA aminoacylation"/>
    <property type="evidence" value="ECO:0007669"/>
    <property type="project" value="UniProtKB-UniRule"/>
</dbReference>
<dbReference type="CDD" id="cd00808">
    <property type="entry name" value="GluRS_core"/>
    <property type="match status" value="1"/>
</dbReference>
<dbReference type="FunFam" id="3.40.50.620:FF:000288">
    <property type="entry name" value="Glutamate--tRNA ligase 1"/>
    <property type="match status" value="1"/>
</dbReference>
<dbReference type="Gene3D" id="1.10.10.350">
    <property type="match status" value="1"/>
</dbReference>
<dbReference type="Gene3D" id="3.40.50.620">
    <property type="entry name" value="HUPs"/>
    <property type="match status" value="1"/>
</dbReference>
<dbReference type="HAMAP" id="MF_00022">
    <property type="entry name" value="Glu_tRNA_synth_type1"/>
    <property type="match status" value="1"/>
</dbReference>
<dbReference type="InterPro" id="IPR045462">
    <property type="entry name" value="aa-tRNA-synth_I_cd-bd"/>
</dbReference>
<dbReference type="InterPro" id="IPR020751">
    <property type="entry name" value="aa-tRNA-synth_I_codon-bd_sub2"/>
</dbReference>
<dbReference type="InterPro" id="IPR001412">
    <property type="entry name" value="aa-tRNA-synth_I_CS"/>
</dbReference>
<dbReference type="InterPro" id="IPR008925">
    <property type="entry name" value="aa_tRNA-synth_I_cd-bd_sf"/>
</dbReference>
<dbReference type="InterPro" id="IPR004527">
    <property type="entry name" value="Glu-tRNA-ligase_bac/mito"/>
</dbReference>
<dbReference type="InterPro" id="IPR000924">
    <property type="entry name" value="Glu/Gln-tRNA-synth"/>
</dbReference>
<dbReference type="InterPro" id="IPR020058">
    <property type="entry name" value="Glu/Gln-tRNA-synth_Ib_cat-dom"/>
</dbReference>
<dbReference type="InterPro" id="IPR049940">
    <property type="entry name" value="GluQ/Sye"/>
</dbReference>
<dbReference type="InterPro" id="IPR033910">
    <property type="entry name" value="GluRS_core"/>
</dbReference>
<dbReference type="InterPro" id="IPR014729">
    <property type="entry name" value="Rossmann-like_a/b/a_fold"/>
</dbReference>
<dbReference type="NCBIfam" id="TIGR00464">
    <property type="entry name" value="gltX_bact"/>
    <property type="match status" value="1"/>
</dbReference>
<dbReference type="NCBIfam" id="NF004314">
    <property type="entry name" value="PRK05710.1-3"/>
    <property type="match status" value="1"/>
</dbReference>
<dbReference type="PANTHER" id="PTHR43311">
    <property type="entry name" value="GLUTAMATE--TRNA LIGASE"/>
    <property type="match status" value="1"/>
</dbReference>
<dbReference type="PANTHER" id="PTHR43311:SF2">
    <property type="entry name" value="GLUTAMATE--TRNA LIGASE, MITOCHONDRIAL-RELATED"/>
    <property type="match status" value="1"/>
</dbReference>
<dbReference type="Pfam" id="PF19269">
    <property type="entry name" value="Anticodon_2"/>
    <property type="match status" value="1"/>
</dbReference>
<dbReference type="Pfam" id="PF00749">
    <property type="entry name" value="tRNA-synt_1c"/>
    <property type="match status" value="1"/>
</dbReference>
<dbReference type="PRINTS" id="PR00987">
    <property type="entry name" value="TRNASYNTHGLU"/>
</dbReference>
<dbReference type="SUPFAM" id="SSF48163">
    <property type="entry name" value="An anticodon-binding domain of class I aminoacyl-tRNA synthetases"/>
    <property type="match status" value="1"/>
</dbReference>
<dbReference type="SUPFAM" id="SSF52374">
    <property type="entry name" value="Nucleotidylyl transferase"/>
    <property type="match status" value="1"/>
</dbReference>
<dbReference type="PROSITE" id="PS00178">
    <property type="entry name" value="AA_TRNA_LIGASE_I"/>
    <property type="match status" value="1"/>
</dbReference>
<organism>
    <name type="scientific">Helicobacter pylori (strain J99 / ATCC 700824)</name>
    <name type="common">Campylobacter pylori J99</name>
    <dbReference type="NCBI Taxonomy" id="85963"/>
    <lineage>
        <taxon>Bacteria</taxon>
        <taxon>Pseudomonadati</taxon>
        <taxon>Campylobacterota</taxon>
        <taxon>Epsilonproteobacteria</taxon>
        <taxon>Campylobacterales</taxon>
        <taxon>Helicobacteraceae</taxon>
        <taxon>Helicobacter</taxon>
    </lineage>
</organism>
<accession>Q9ZLZ7</accession>
<protein>
    <recommendedName>
        <fullName evidence="1">Glutamate--tRNA ligase 1</fullName>
        <ecNumber evidence="1">6.1.1.17</ecNumber>
    </recommendedName>
    <alternativeName>
        <fullName evidence="1">Glutamyl-tRNA synthetase 1</fullName>
        <shortName evidence="1">GluRS 1</shortName>
    </alternativeName>
</protein>
<evidence type="ECO:0000255" key="1">
    <source>
        <dbReference type="HAMAP-Rule" id="MF_00022"/>
    </source>
</evidence>
<keyword id="KW-0030">Aminoacyl-tRNA synthetase</keyword>
<keyword id="KW-0067">ATP-binding</keyword>
<keyword id="KW-0963">Cytoplasm</keyword>
<keyword id="KW-0436">Ligase</keyword>
<keyword id="KW-0547">Nucleotide-binding</keyword>
<keyword id="KW-0648">Protein biosynthesis</keyword>
<comment type="function">
    <text evidence="1">Catalyzes the attachment of glutamate to tRNA(Glu) in a two-step reaction: glutamate is first activated by ATP to form Glu-AMP and then transferred to the acceptor end of tRNA(Glu).</text>
</comment>
<comment type="catalytic activity">
    <reaction evidence="1">
        <text>tRNA(Glu) + L-glutamate + ATP = L-glutamyl-tRNA(Glu) + AMP + diphosphate</text>
        <dbReference type="Rhea" id="RHEA:23540"/>
        <dbReference type="Rhea" id="RHEA-COMP:9663"/>
        <dbReference type="Rhea" id="RHEA-COMP:9680"/>
        <dbReference type="ChEBI" id="CHEBI:29985"/>
        <dbReference type="ChEBI" id="CHEBI:30616"/>
        <dbReference type="ChEBI" id="CHEBI:33019"/>
        <dbReference type="ChEBI" id="CHEBI:78442"/>
        <dbReference type="ChEBI" id="CHEBI:78520"/>
        <dbReference type="ChEBI" id="CHEBI:456215"/>
        <dbReference type="EC" id="6.1.1.17"/>
    </reaction>
</comment>
<comment type="subunit">
    <text evidence="1">Monomer.</text>
</comment>
<comment type="subcellular location">
    <subcellularLocation>
        <location evidence="1">Cytoplasm</location>
    </subcellularLocation>
</comment>
<comment type="similarity">
    <text evidence="1">Belongs to the class-I aminoacyl-tRNA synthetase family. Glutamate--tRNA ligase type 1 subfamily.</text>
</comment>